<comment type="function">
    <text evidence="3">Component of the cytochrome c oxidase, the last enzyme in the mitochondrial electron transport chain which drives oxidative phosphorylation. The respiratory chain contains 3 multisubunit complexes succinate dehydrogenase (complex II, CII), ubiquinol-cytochrome c oxidoreductase (cytochrome b-c1 complex, complex III, CIII) and cytochrome c oxidase (complex IV, CIV), that cooperate to transfer electrons derived from NADH and succinate to molecular oxygen, creating an electrochemical gradient over the inner membrane that drives transmembrane transport and the ATP synthase. Cytochrome c oxidase is the component of the respiratory chain that catalyzes the reduction of oxygen to water. Electrons originating from reduced cytochrome c in the intermembrane space (IMS) are transferred via the dinuclear copper A center (CU(A)) of subunit 2 and heme A of subunit 1 to the active site in subunit 1, a binuclear center (BNC) formed by heme A3 and copper B (CU(B)). The BNC reduces molecular oxygen to 2 water molecules using 4 electrons from cytochrome c in the IMS and 4 protons from the mitochondrial matrix.</text>
</comment>
<comment type="catalytic activity">
    <reaction evidence="3">
        <text>4 Fe(II)-[cytochrome c] + O2 + 8 H(+)(in) = 4 Fe(III)-[cytochrome c] + 2 H2O + 4 H(+)(out)</text>
        <dbReference type="Rhea" id="RHEA:11436"/>
        <dbReference type="Rhea" id="RHEA-COMP:10350"/>
        <dbReference type="Rhea" id="RHEA-COMP:14399"/>
        <dbReference type="ChEBI" id="CHEBI:15377"/>
        <dbReference type="ChEBI" id="CHEBI:15378"/>
        <dbReference type="ChEBI" id="CHEBI:15379"/>
        <dbReference type="ChEBI" id="CHEBI:29033"/>
        <dbReference type="ChEBI" id="CHEBI:29034"/>
        <dbReference type="EC" id="7.1.1.9"/>
    </reaction>
    <physiologicalReaction direction="left-to-right" evidence="3">
        <dbReference type="Rhea" id="RHEA:11437"/>
    </physiologicalReaction>
</comment>
<comment type="cofactor">
    <cofactor evidence="2">
        <name>heme</name>
        <dbReference type="ChEBI" id="CHEBI:30413"/>
    </cofactor>
    <text evidence="2">Binds 2 heme A groups non-covalently per subunit.</text>
</comment>
<comment type="cofactor">
    <cofactor evidence="2">
        <name>Cu cation</name>
        <dbReference type="ChEBI" id="CHEBI:23378"/>
    </cofactor>
    <text evidence="2">Binds a copper B center.</text>
</comment>
<comment type="pathway">
    <text evidence="3">Energy metabolism; oxidative phosphorylation.</text>
</comment>
<comment type="subunit">
    <text evidence="1 2">Component of the cytochrome c oxidase (complex IV, CIV), a multisubunit enzyme composed of 14 subunits. The complex is composed of a catalytic core of 3 subunits MT-CO1, MT-CO2 and MT-CO3, encoded in the mitochondrial DNA, and 11 supernumerary subunits COX4I, COX5A, COX5B, COX6A, COX6B, COX6C, COX7A, COX7B, COX7C, COX8 and NDUFA4, which are encoded in the nuclear genome. The complex exists as a monomer or a dimer and forms supercomplexes (SCs) in the inner mitochondrial membrane with NADH-ubiquinone oxidoreductase (complex I, CI) and ubiquinol-cytochrome c oxidoreductase (cytochrome b-c1 complex, complex III, CIII), resulting in different assemblies (supercomplex SCI(1)III(2)IV(1) and megacomplex MCI(2)III(2)IV(2)) (By similarity). As a newly synthesized protein, rapidly incorporates into a multi-subunit assembly intermediate in the inner membrane, called MITRAC (mitochondrial translation regulation assembly intermediate of cytochrome c oxidase) complex, whose core components are COA3/MITRAC12 and COX14. Within the MITRAC complex, interacts with COA3 and with SMIM20/MITRAC7; the interaction with SMIM20 stabilizes the newly synthesized MT-CO1 and prevents its premature turnover. Interacts with TMEM177 in a COX20-dependent manner (By similarity).</text>
</comment>
<comment type="subcellular location">
    <subcellularLocation>
        <location evidence="2">Mitochondrion inner membrane</location>
        <topology evidence="2">Multi-pass membrane protein</topology>
    </subcellularLocation>
</comment>
<comment type="similarity">
    <text evidence="4">Belongs to the heme-copper respiratory oxidase family.</text>
</comment>
<feature type="chain" id="PRO_0000183433" description="Cytochrome c oxidase subunit 1">
    <location>
        <begin position="1"/>
        <end position="516"/>
    </location>
</feature>
<feature type="topological domain" description="Mitochondrial matrix" evidence="2">
    <location>
        <begin position="1"/>
        <end position="11"/>
    </location>
</feature>
<feature type="transmembrane region" description="Helical; Name=I" evidence="2">
    <location>
        <begin position="12"/>
        <end position="40"/>
    </location>
</feature>
<feature type="topological domain" description="Mitochondrial intermembrane" evidence="2">
    <location>
        <begin position="41"/>
        <end position="50"/>
    </location>
</feature>
<feature type="transmembrane region" description="Helical; Name=II" evidence="2">
    <location>
        <begin position="51"/>
        <end position="86"/>
    </location>
</feature>
<feature type="topological domain" description="Mitochondrial matrix" evidence="2">
    <location>
        <begin position="87"/>
        <end position="94"/>
    </location>
</feature>
<feature type="transmembrane region" description="Helical; Name=III" evidence="2">
    <location>
        <begin position="95"/>
        <end position="117"/>
    </location>
</feature>
<feature type="topological domain" description="Mitochondrial intermembrane" evidence="2">
    <location>
        <begin position="118"/>
        <end position="140"/>
    </location>
</feature>
<feature type="transmembrane region" description="Helical; Name=IV" evidence="2">
    <location>
        <begin position="141"/>
        <end position="170"/>
    </location>
</feature>
<feature type="topological domain" description="Mitochondrial matrix" evidence="2">
    <location>
        <begin position="171"/>
        <end position="182"/>
    </location>
</feature>
<feature type="transmembrane region" description="Helical; Name=V" evidence="2">
    <location>
        <begin position="183"/>
        <end position="212"/>
    </location>
</feature>
<feature type="topological domain" description="Mitochondrial intermembrane" evidence="2">
    <location>
        <begin position="213"/>
        <end position="227"/>
    </location>
</feature>
<feature type="transmembrane region" description="Helical; Name=VI" evidence="2">
    <location>
        <begin position="228"/>
        <end position="261"/>
    </location>
</feature>
<feature type="topological domain" description="Mitochondrial matrix" evidence="2">
    <location>
        <begin position="262"/>
        <end position="269"/>
    </location>
</feature>
<feature type="transmembrane region" description="Helical; Name=VII" evidence="2">
    <location>
        <begin position="270"/>
        <end position="286"/>
    </location>
</feature>
<feature type="topological domain" description="Mitochondrial intermembrane" evidence="2">
    <location>
        <begin position="287"/>
        <end position="298"/>
    </location>
</feature>
<feature type="transmembrane region" description="Helical; Name=VIII" evidence="2">
    <location>
        <begin position="299"/>
        <end position="327"/>
    </location>
</feature>
<feature type="topological domain" description="Mitochondrial matrix" evidence="2">
    <location>
        <begin position="328"/>
        <end position="335"/>
    </location>
</feature>
<feature type="transmembrane region" description="Helical; Name=IX" evidence="2">
    <location>
        <begin position="336"/>
        <end position="357"/>
    </location>
</feature>
<feature type="topological domain" description="Mitochondrial intermembrane" evidence="2">
    <location>
        <begin position="358"/>
        <end position="370"/>
    </location>
</feature>
<feature type="transmembrane region" description="Helical; Name=X" evidence="2">
    <location>
        <begin position="371"/>
        <end position="400"/>
    </location>
</feature>
<feature type="topological domain" description="Mitochondrial matrix" evidence="2">
    <location>
        <begin position="401"/>
        <end position="406"/>
    </location>
</feature>
<feature type="transmembrane region" description="Helical; Name=XI" evidence="2">
    <location>
        <begin position="407"/>
        <end position="433"/>
    </location>
</feature>
<feature type="topological domain" description="Mitochondrial intermembrane" evidence="2">
    <location>
        <begin position="434"/>
        <end position="446"/>
    </location>
</feature>
<feature type="transmembrane region" description="Helical; Name=XII" evidence="2">
    <location>
        <begin position="447"/>
        <end position="478"/>
    </location>
</feature>
<feature type="topological domain" description="Mitochondrial matrix" evidence="2">
    <location>
        <begin position="479"/>
        <end position="516"/>
    </location>
</feature>
<feature type="binding site" evidence="2">
    <location>
        <position position="40"/>
    </location>
    <ligand>
        <name>Na(+)</name>
        <dbReference type="ChEBI" id="CHEBI:29101"/>
    </ligand>
</feature>
<feature type="binding site" evidence="2">
    <location>
        <position position="45"/>
    </location>
    <ligand>
        <name>Na(+)</name>
        <dbReference type="ChEBI" id="CHEBI:29101"/>
    </ligand>
</feature>
<feature type="binding site" description="axial binding residue" evidence="2">
    <location>
        <position position="61"/>
    </location>
    <ligand>
        <name>Fe(II)-heme a</name>
        <dbReference type="ChEBI" id="CHEBI:61715"/>
        <note>low-spin</note>
    </ligand>
    <ligandPart>
        <name>Fe</name>
        <dbReference type="ChEBI" id="CHEBI:18248"/>
    </ligandPart>
</feature>
<feature type="binding site" evidence="2">
    <location>
        <position position="240"/>
    </location>
    <ligand>
        <name>Cu cation</name>
        <dbReference type="ChEBI" id="CHEBI:23378"/>
        <label>B</label>
    </ligand>
</feature>
<feature type="binding site" evidence="2">
    <location>
        <position position="244"/>
    </location>
    <ligand>
        <name>O2</name>
        <dbReference type="ChEBI" id="CHEBI:15379"/>
    </ligand>
</feature>
<feature type="binding site" evidence="2">
    <location>
        <position position="290"/>
    </location>
    <ligand>
        <name>Cu cation</name>
        <dbReference type="ChEBI" id="CHEBI:23378"/>
        <label>B</label>
    </ligand>
</feature>
<feature type="binding site" evidence="2">
    <location>
        <position position="291"/>
    </location>
    <ligand>
        <name>Cu cation</name>
        <dbReference type="ChEBI" id="CHEBI:23378"/>
        <label>B</label>
    </ligand>
</feature>
<feature type="binding site" evidence="2">
    <location>
        <position position="368"/>
    </location>
    <ligand>
        <name>Mg(2+)</name>
        <dbReference type="ChEBI" id="CHEBI:18420"/>
        <note>ligand shared with MT-CO2</note>
    </ligand>
</feature>
<feature type="binding site" evidence="2">
    <location>
        <position position="369"/>
    </location>
    <ligand>
        <name>Mg(2+)</name>
        <dbReference type="ChEBI" id="CHEBI:18420"/>
        <note>ligand shared with MT-CO2</note>
    </ligand>
</feature>
<feature type="binding site" description="axial binding residue" evidence="2">
    <location>
        <position position="376"/>
    </location>
    <ligand>
        <name>heme a3</name>
        <dbReference type="ChEBI" id="CHEBI:83282"/>
        <note>high-spin</note>
    </ligand>
    <ligandPart>
        <name>Fe</name>
        <dbReference type="ChEBI" id="CHEBI:18248"/>
    </ligandPart>
</feature>
<feature type="binding site" description="axial binding residue" evidence="2">
    <location>
        <position position="378"/>
    </location>
    <ligand>
        <name>Fe(II)-heme a</name>
        <dbReference type="ChEBI" id="CHEBI:61715"/>
        <note>low-spin</note>
    </ligand>
    <ligandPart>
        <name>Fe</name>
        <dbReference type="ChEBI" id="CHEBI:18248"/>
    </ligandPart>
</feature>
<feature type="binding site" evidence="2">
    <location>
        <position position="441"/>
    </location>
    <ligand>
        <name>Na(+)</name>
        <dbReference type="ChEBI" id="CHEBI:29101"/>
    </ligand>
</feature>
<feature type="cross-link" description="1'-histidyl-3'-tyrosine (His-Tyr)" evidence="2">
    <location>
        <begin position="240"/>
        <end position="244"/>
    </location>
</feature>
<protein>
    <recommendedName>
        <fullName>Cytochrome c oxidase subunit 1</fullName>
        <ecNumber>7.1.1.9</ecNumber>
    </recommendedName>
    <alternativeName>
        <fullName>Cytochrome c oxidase polypeptide I</fullName>
    </alternativeName>
</protein>
<geneLocation type="mitochondrion"/>
<proteinExistence type="inferred from homology"/>
<keyword id="KW-0106">Calcium</keyword>
<keyword id="KW-0186">Copper</keyword>
<keyword id="KW-0249">Electron transport</keyword>
<keyword id="KW-0349">Heme</keyword>
<keyword id="KW-0408">Iron</keyword>
<keyword id="KW-0460">Magnesium</keyword>
<keyword id="KW-0472">Membrane</keyword>
<keyword id="KW-0479">Metal-binding</keyword>
<keyword id="KW-0496">Mitochondrion</keyword>
<keyword id="KW-0999">Mitochondrion inner membrane</keyword>
<keyword id="KW-0679">Respiratory chain</keyword>
<keyword id="KW-0915">Sodium</keyword>
<keyword id="KW-1278">Translocase</keyword>
<keyword id="KW-0812">Transmembrane</keyword>
<keyword id="KW-1133">Transmembrane helix</keyword>
<keyword id="KW-0813">Transport</keyword>
<evidence type="ECO:0000250" key="1">
    <source>
        <dbReference type="UniProtKB" id="P00395"/>
    </source>
</evidence>
<evidence type="ECO:0000250" key="2">
    <source>
        <dbReference type="UniProtKB" id="P00396"/>
    </source>
</evidence>
<evidence type="ECO:0000250" key="3">
    <source>
        <dbReference type="UniProtKB" id="P00401"/>
    </source>
</evidence>
<evidence type="ECO:0000305" key="4"/>
<reference key="1">
    <citation type="journal article" date="2004" name="J. Mammal. Evol.">
        <title>DNA data support a rapid radiation of pocket gopher genera.</title>
        <authorList>
            <person name="Spradling T.A."/>
            <person name="Brant S.V."/>
            <person name="Hafner M.S."/>
            <person name="Dickerson C.J."/>
        </authorList>
    </citation>
    <scope>NUCLEOTIDE SEQUENCE [GENOMIC DNA]</scope>
</reference>
<accession>Q6EGH7</accession>
<name>COX1_ZYGTR</name>
<organism>
    <name type="scientific">Zygogeomys trichopus</name>
    <name type="common">Michoacan pocket gopher</name>
    <dbReference type="NCBI Taxonomy" id="35668"/>
    <lineage>
        <taxon>Eukaryota</taxon>
        <taxon>Metazoa</taxon>
        <taxon>Chordata</taxon>
        <taxon>Craniata</taxon>
        <taxon>Vertebrata</taxon>
        <taxon>Euteleostomi</taxon>
        <taxon>Mammalia</taxon>
        <taxon>Eutheria</taxon>
        <taxon>Euarchontoglires</taxon>
        <taxon>Glires</taxon>
        <taxon>Rodentia</taxon>
        <taxon>Castorimorpha</taxon>
        <taxon>Geomyidae</taxon>
        <taxon>Zygogeomys</taxon>
    </lineage>
</organism>
<gene>
    <name type="primary">MT-CO1</name>
    <name type="synonym">COI</name>
    <name type="synonym">COXI</name>
    <name type="synonym">MTCO1</name>
</gene>
<dbReference type="EC" id="7.1.1.9"/>
<dbReference type="EMBL" id="AY331087">
    <property type="protein sequence ID" value="AAR02588.1"/>
    <property type="molecule type" value="Genomic_DNA"/>
</dbReference>
<dbReference type="UniPathway" id="UPA00705"/>
<dbReference type="GO" id="GO:0005743">
    <property type="term" value="C:mitochondrial inner membrane"/>
    <property type="evidence" value="ECO:0007669"/>
    <property type="project" value="UniProtKB-SubCell"/>
</dbReference>
<dbReference type="GO" id="GO:0045277">
    <property type="term" value="C:respiratory chain complex IV"/>
    <property type="evidence" value="ECO:0000250"/>
    <property type="project" value="UniProtKB"/>
</dbReference>
<dbReference type="GO" id="GO:0004129">
    <property type="term" value="F:cytochrome-c oxidase activity"/>
    <property type="evidence" value="ECO:0007669"/>
    <property type="project" value="UniProtKB-EC"/>
</dbReference>
<dbReference type="GO" id="GO:0020037">
    <property type="term" value="F:heme binding"/>
    <property type="evidence" value="ECO:0007669"/>
    <property type="project" value="InterPro"/>
</dbReference>
<dbReference type="GO" id="GO:0046872">
    <property type="term" value="F:metal ion binding"/>
    <property type="evidence" value="ECO:0007669"/>
    <property type="project" value="UniProtKB-KW"/>
</dbReference>
<dbReference type="GO" id="GO:0015990">
    <property type="term" value="P:electron transport coupled proton transport"/>
    <property type="evidence" value="ECO:0007669"/>
    <property type="project" value="TreeGrafter"/>
</dbReference>
<dbReference type="GO" id="GO:0006123">
    <property type="term" value="P:mitochondrial electron transport, cytochrome c to oxygen"/>
    <property type="evidence" value="ECO:0007669"/>
    <property type="project" value="TreeGrafter"/>
</dbReference>
<dbReference type="CDD" id="cd01663">
    <property type="entry name" value="Cyt_c_Oxidase_I"/>
    <property type="match status" value="1"/>
</dbReference>
<dbReference type="FunFam" id="1.20.210.10:FF:000001">
    <property type="entry name" value="Cytochrome c oxidase subunit 1"/>
    <property type="match status" value="1"/>
</dbReference>
<dbReference type="Gene3D" id="1.20.210.10">
    <property type="entry name" value="Cytochrome c oxidase-like, subunit I domain"/>
    <property type="match status" value="1"/>
</dbReference>
<dbReference type="InterPro" id="IPR023616">
    <property type="entry name" value="Cyt_c_oxase-like_su1_dom"/>
</dbReference>
<dbReference type="InterPro" id="IPR036927">
    <property type="entry name" value="Cyt_c_oxase-like_su1_sf"/>
</dbReference>
<dbReference type="InterPro" id="IPR000883">
    <property type="entry name" value="Cyt_C_Oxase_1"/>
</dbReference>
<dbReference type="InterPro" id="IPR023615">
    <property type="entry name" value="Cyt_c_Oxase_su1_BS"/>
</dbReference>
<dbReference type="InterPro" id="IPR033944">
    <property type="entry name" value="Cyt_c_oxase_su1_dom"/>
</dbReference>
<dbReference type="PANTHER" id="PTHR10422">
    <property type="entry name" value="CYTOCHROME C OXIDASE SUBUNIT 1"/>
    <property type="match status" value="1"/>
</dbReference>
<dbReference type="PANTHER" id="PTHR10422:SF18">
    <property type="entry name" value="CYTOCHROME C OXIDASE SUBUNIT 1"/>
    <property type="match status" value="1"/>
</dbReference>
<dbReference type="Pfam" id="PF00115">
    <property type="entry name" value="COX1"/>
    <property type="match status" value="1"/>
</dbReference>
<dbReference type="PRINTS" id="PR01165">
    <property type="entry name" value="CYCOXIDASEI"/>
</dbReference>
<dbReference type="SUPFAM" id="SSF81442">
    <property type="entry name" value="Cytochrome c oxidase subunit I-like"/>
    <property type="match status" value="1"/>
</dbReference>
<dbReference type="PROSITE" id="PS50855">
    <property type="entry name" value="COX1"/>
    <property type="match status" value="1"/>
</dbReference>
<dbReference type="PROSITE" id="PS00077">
    <property type="entry name" value="COX1_CUB"/>
    <property type="match status" value="1"/>
</dbReference>
<sequence>MFINRWLFSTNHKDIGTLYMIFGAWAGMVGTGLSILIRAELGQPGSLLGDDQIYNVVVTAHAFVMIFFMVMPIMIGGFGNWLVPLMIGAPDMAFPRMNNMSFWLLPPSFLLLLASSTVEAGAGTGWTVYPPLAGNLAHAGASVDLTIFSLHLAGVSSILGAINFITTIINMKPPAITQYQTPLFVWSVLITAVLLLLSLPVLAAGITMLLTDRNLNTTFFDPAGGGDPILYQHLFWFFGHPEVYILILPGFGMISHIVTYYSGKKEPFGYMGMVWAMMSIGFLGFIVWAHHMFTVGMDVDTRAYFTSATMIIAIPTGVKVFSWLATLHGGNIKWSPAMLWALGFIFLFTIGGLTGIVLSNSSLDIVLHDTYYVVAHFHYVLSMGAVFAIMGGFVHWFPLFTGYTLNDTWAKIHFTIMFVGVNMTFFPQHFLGLAGMPRRYSDYPDAYXTWNTISSMGSFISLTAVILMVFMIWEALASKRVVKSVQLTSTNLEWIHGCPPPFHTFEEPVFIKSSQT</sequence>